<feature type="chain" id="PRO_0000222703" description="Structural core protein VP2">
    <location>
        <begin position="1"/>
        <end position="908"/>
    </location>
</feature>
<feature type="region of interest" description="Disordered" evidence="1">
    <location>
        <begin position="1"/>
        <end position="25"/>
    </location>
</feature>
<feature type="compositionally biased region" description="Polar residues" evidence="1">
    <location>
        <begin position="1"/>
        <end position="19"/>
    </location>
</feature>
<dbReference type="EMBL" id="M87875">
    <property type="status" value="NOT_ANNOTATED_CDS"/>
    <property type="molecule type" value="Genomic_RNA"/>
</dbReference>
<dbReference type="PIR" id="JQ1938">
    <property type="entry name" value="JQ1938"/>
</dbReference>
<dbReference type="SMR" id="P35934"/>
<dbReference type="GO" id="GO:0039625">
    <property type="term" value="C:viral inner capsid"/>
    <property type="evidence" value="ECO:0007669"/>
    <property type="project" value="UniProtKB-KW"/>
</dbReference>
<dbReference type="GO" id="GO:0005198">
    <property type="term" value="F:structural molecule activity"/>
    <property type="evidence" value="ECO:0007669"/>
    <property type="project" value="InterPro"/>
</dbReference>
<dbReference type="InterPro" id="IPR002614">
    <property type="entry name" value="Inner_layer_core_VP3_Orbivir"/>
</dbReference>
<dbReference type="InterPro" id="IPR016029">
    <property type="entry name" value="Inner_layer_core_VP3_Reovir"/>
</dbReference>
<dbReference type="Pfam" id="PF01700">
    <property type="entry name" value="Orbi_VP3"/>
    <property type="match status" value="1"/>
</dbReference>
<dbReference type="SUPFAM" id="SSF56831">
    <property type="entry name" value="Reovirus inner layer core protein p3"/>
    <property type="match status" value="1"/>
</dbReference>
<organismHost>
    <name type="scientific">Ixodes</name>
    <dbReference type="NCBI Taxonomy" id="6944"/>
</organismHost>
<organismHost>
    <name type="scientific">Laridae</name>
    <name type="common">gulls</name>
    <dbReference type="NCBI Taxonomy" id="8910"/>
</organismHost>
<organismHost>
    <name type="scientific">Pelecaniformes</name>
    <name type="common">Ibis, herons and pelicans</name>
    <dbReference type="NCBI Taxonomy" id="9205"/>
</organismHost>
<keyword id="KW-0167">Capsid protein</keyword>
<keyword id="KW-1153">Inner capsid protein</keyword>
<keyword id="KW-0946">Virion</keyword>
<evidence type="ECO:0000256" key="1">
    <source>
        <dbReference type="SAM" id="MobiDB-lite"/>
    </source>
</evidence>
<evidence type="ECO:0000305" key="2"/>
<organism>
    <name type="scientific">Broadhaven virus</name>
    <name type="common">BRD</name>
    <dbReference type="NCBI Taxonomy" id="10893"/>
    <lineage>
        <taxon>Viruses</taxon>
        <taxon>Riboviria</taxon>
        <taxon>Orthornavirae</taxon>
        <taxon>Duplornaviricota</taxon>
        <taxon>Resentoviricetes</taxon>
        <taxon>Reovirales</taxon>
        <taxon>Sedoreoviridae</taxon>
        <taxon>Orbivirus</taxon>
        <taxon>Great Island virus</taxon>
    </lineage>
</organism>
<protein>
    <recommendedName>
        <fullName>Structural core protein VP2</fullName>
    </recommendedName>
</protein>
<comment type="subcellular location">
    <subcellularLocation>
        <location evidence="2">Virion</location>
    </subcellularLocation>
</comment>
<comment type="similarity">
    <text evidence="2">Belongs to the orbivirus VP3 family.</text>
</comment>
<gene>
    <name type="primary">Segment-2</name>
</gene>
<sequence>MANPQNRVQTERQQNNSSPYLRGDEVHDDPGIALSVFALQEIIRKVRESQTSLRNEGREVNPAPPEIEQIFSALRHLRDERPYRIERTLPTYYRFESSQSQERFFRVDSHFERIAAPVDNATLEEPARLMSLVSRRVDAIRDAGSFLLYNAPTHFVDGREIIDADGLGVDVSGPASPRRAEGASPATRQIDQLTVLNQDQEDTMVDTYPGACPDAVFRVHRALTAHVVHHQRDDYRNAMQWLQAYGEYKRIDFSRSLLTDVFSPDTVYIQSYHVPANPQLLWEVPRCGIPNLRAKRVLGVPHGTYITPNPRITSITIASRVTTTTSFAQLLGTIPTAAQMDDVRKIYLALMFPNQILLDIRSEPGHQVDVVAQSVAGVLGKLLFSYGPALFNITPHTPGPLIVHAPLSCKWQPMIRRTIRHGPSGRPLDFVITQGQRAFDCNQLAQNPARGNGYAGWGVDAVGDHPTPYPHVRRRIQYLGYVPEDVIDERFCGDDLRYPLHQTMCEALAISGHVNERNYVEMMRHDHVVRFAHLSQVINRDLVSALSLPDERFNMLAAVFPRDATGPDGPLVLDISYMAIIHAFRLRFLPVSRPERIIYQPMLESVYASHLSLAKLHANNLQTFVTANSESFVEARPLDTWRAVYPRLPEPVRQIFDLTGQHSFVTGSDIGLWLRSPLVQDSLFLLCARTAWQAVDDPADIGFTRDVYIHRQPIPGYPLEDVRQFRRDAVYFTNMLEARPANGNRVILDRAIMQQRAGAGRLRMSIRELLDDGLFVQIGIALRPNYFEHPSRLPPEETLRALPFEYRARARNGPTARVTLQMLRPVSAFFMLYNADEQAFPDEMIDLVPKMSLVSLYIQQPPVERVSYDTALSVINRDFVSFRSRVRLMDLSAAFDAGSQYALPSNAM</sequence>
<name>VP2_BRD</name>
<proteinExistence type="inferred from homology"/>
<accession>P35934</accession>
<reference key="1">
    <citation type="journal article" date="1992" name="J. Gen. Virol.">
        <title>Comparison of the major structural core proteins of tick-borne and Culicoides-borne orbiviruses.</title>
        <authorList>
            <person name="Moss S.R."/>
            <person name="Jones L.D."/>
            <person name="Nuttall P.A."/>
        </authorList>
    </citation>
    <scope>NUCLEOTIDE SEQUENCE [GENOMIC RNA]</scope>
</reference>